<comment type="function">
    <text evidence="3 4 5 6">Transcription factor that binds to the sequence motif 5'-CATCCCATAATA-3', and is specifically required to silence expression of fetal hemoglobin in adult erythroid cells (PubMed:33301730, PubMed:33859416). Prevents expression of fetal hemoglobin genes HBG1 and HBG2 through CHD4: acts as a direct transcriptional activator of CHD4, a central component of the NuRD complex that represses transcription of fetal hemoglobin genes HBG1 and HBG2 in erythroid cells (PubMed:33301730, PubMed:33859416). May also activate transcription of matrix-remodeling genes such as MMP1 during fibroblast senescence (PubMed:12370286). May activate transcription of the gap junction gene GJC1, perhaps in response to increasing glucose (PubMed:30078215). However, recent studies suggest that ZNF410 is dedicated to regulate expression of a single gene: CHD4 (PubMed:33301730, PubMed:33859416).</text>
</comment>
<comment type="subunit">
    <text evidence="3">Interacts with CDKN2A/p14ARF.</text>
</comment>
<comment type="interaction">
    <interactant intactId="EBI-720304">
        <id>Q86VK4</id>
    </interactant>
    <interactant intactId="EBI-2548012">
        <id>Q9H2G9</id>
        <label>BLZF1</label>
    </interactant>
    <organismsDiffer>false</organismsDiffer>
    <experiments>4</experiments>
</comment>
<comment type="interaction">
    <interactant intactId="EBI-720304">
        <id>Q86VK4</id>
    </interactant>
    <interactant intactId="EBI-739624">
        <id>Q8NHQ1</id>
        <label>CEP70</label>
    </interactant>
    <organismsDiffer>false</organismsDiffer>
    <experiments>3</experiments>
</comment>
<comment type="interaction">
    <interactant intactId="EBI-720304">
        <id>Q86VK4</id>
    </interactant>
    <interactant intactId="EBI-10175124">
        <id>Q8IZU0</id>
        <label>FAM9B</label>
    </interactant>
    <organismsDiffer>false</organismsDiffer>
    <experiments>3</experiments>
</comment>
<comment type="interaction">
    <interactant intactId="EBI-720304">
        <id>Q86VK4</id>
    </interactant>
    <interactant intactId="EBI-5661036">
        <id>A1L4K1</id>
        <label>FSD2</label>
    </interactant>
    <organismsDiffer>false</organismsDiffer>
    <experiments>3</experiments>
</comment>
<comment type="interaction">
    <interactant intactId="EBI-720304">
        <id>Q86VK4</id>
    </interactant>
    <interactant intactId="EBI-618309">
        <id>Q08379</id>
        <label>GOLGA2</label>
    </interactant>
    <organismsDiffer>false</organismsDiffer>
    <experiments>3</experiments>
</comment>
<comment type="interaction">
    <interactant intactId="EBI-720304">
        <id>Q86VK4</id>
    </interactant>
    <interactant intactId="EBI-742948">
        <id>Q5JR59</id>
        <label>MTUS2</label>
    </interactant>
    <organismsDiffer>false</organismsDiffer>
    <experiments>3</experiments>
</comment>
<comment type="interaction">
    <interactant intactId="EBI-720304">
        <id>Q86VK4</id>
    </interactant>
    <interactant intactId="EBI-747844">
        <id>Q96QF0</id>
        <label>RAB3IP</label>
    </interactant>
    <organismsDiffer>false</organismsDiffer>
    <experiments>3</experiments>
</comment>
<comment type="interaction">
    <interactant intactId="EBI-720304">
        <id>Q86VK4</id>
    </interactant>
    <interactant intactId="EBI-2826300">
        <id>Q53GC0</id>
        <label>SERTAD1</label>
    </interactant>
    <organismsDiffer>false</organismsDiffer>
    <experiments>3</experiments>
</comment>
<comment type="interaction">
    <interactant intactId="EBI-720304">
        <id>Q86VK4</id>
    </interactant>
    <interactant intactId="EBI-355744">
        <id>Q12933</id>
        <label>TRAF2</label>
    </interactant>
    <organismsDiffer>false</organismsDiffer>
    <experiments>3</experiments>
</comment>
<comment type="interaction">
    <interactant intactId="EBI-720304">
        <id>Q86VK4</id>
    </interactant>
    <interactant intactId="EBI-744794">
        <id>Q9BZW7</id>
        <label>TSGA10</label>
    </interactant>
    <organismsDiffer>false</organismsDiffer>
    <experiments>3</experiments>
</comment>
<comment type="interaction">
    <interactant intactId="EBI-720304">
        <id>Q86VK4</id>
    </interactant>
    <interactant intactId="EBI-10213894">
        <id>Q8NF99</id>
        <label>ZNF397</label>
    </interactant>
    <organismsDiffer>false</organismsDiffer>
    <experiments>3</experiments>
</comment>
<comment type="interaction">
    <interactant intactId="EBI-11741890">
        <id>Q86VK4-3</id>
    </interactant>
    <interactant intactId="EBI-17180442">
        <id>Q96I13</id>
        <label>ABHD8</label>
    </interactant>
    <organismsDiffer>false</organismsDiffer>
    <experiments>3</experiments>
</comment>
<comment type="interaction">
    <interactant intactId="EBI-11741890">
        <id>Q86VK4-3</id>
    </interactant>
    <interactant intactId="EBI-712648">
        <id>O95994</id>
        <label>AGR2</label>
    </interactant>
    <organismsDiffer>false</organismsDiffer>
    <experiments>3</experiments>
</comment>
<comment type="interaction">
    <interactant intactId="EBI-11741890">
        <id>Q86VK4-3</id>
    </interactant>
    <interactant intactId="EBI-3447299">
        <id>O43307</id>
        <label>ARHGEF9</label>
    </interactant>
    <organismsDiffer>false</organismsDiffer>
    <experiments>3</experiments>
</comment>
<comment type="interaction">
    <interactant intactId="EBI-11741890">
        <id>Q86VK4-3</id>
    </interactant>
    <interactant intactId="EBI-11524452">
        <id>Q8N9N5-2</id>
        <label>BANP</label>
    </interactant>
    <organismsDiffer>false</organismsDiffer>
    <experiments>3</experiments>
</comment>
<comment type="interaction">
    <interactant intactId="EBI-11741890">
        <id>Q86VK4-3</id>
    </interactant>
    <interactant intactId="EBI-2548012">
        <id>Q9H2G9</id>
        <label>BLZF1</label>
    </interactant>
    <organismsDiffer>false</organismsDiffer>
    <experiments>7</experiments>
</comment>
<comment type="interaction">
    <interactant intactId="EBI-11741890">
        <id>Q86VK4-3</id>
    </interactant>
    <interactant intactId="EBI-11532021">
        <id>P20807-4</id>
        <label>CAPN3</label>
    </interactant>
    <organismsDiffer>false</organismsDiffer>
    <experiments>3</experiments>
</comment>
<comment type="interaction">
    <interactant intactId="EBI-11741890">
        <id>Q86VK4-3</id>
    </interactant>
    <interactant intactId="EBI-2528309">
        <id>Q03692</id>
        <label>COL10A1</label>
    </interactant>
    <organismsDiffer>false</organismsDiffer>
    <experiments>3</experiments>
</comment>
<comment type="interaction">
    <interactant intactId="EBI-11741890">
        <id>Q86VK4-3</id>
    </interactant>
    <interactant intactId="EBI-348169">
        <id>P67870</id>
        <label>CSNK2B</label>
    </interactant>
    <organismsDiffer>false</organismsDiffer>
    <experiments>3</experiments>
</comment>
<comment type="interaction">
    <interactant intactId="EBI-11741890">
        <id>Q86VK4-3</id>
    </interactant>
    <interactant intactId="EBI-742054">
        <id>Q96D03</id>
        <label>DDIT4L</label>
    </interactant>
    <organismsDiffer>false</organismsDiffer>
    <experiments>5</experiments>
</comment>
<comment type="interaction">
    <interactant intactId="EBI-11741890">
        <id>Q86VK4-3</id>
    </interactant>
    <interactant intactId="EBI-18398199">
        <id>A0A0U1RQF7</id>
        <label>DPEP2NB</label>
    </interactant>
    <organismsDiffer>false</organismsDiffer>
    <experiments>3</experiments>
</comment>
<comment type="interaction">
    <interactant intactId="EBI-11741890">
        <id>Q86VK4-3</id>
    </interactant>
    <interactant intactId="EBI-701903">
        <id>Q14192</id>
        <label>FHL2</label>
    </interactant>
    <organismsDiffer>false</organismsDiffer>
    <experiments>3</experiments>
</comment>
<comment type="interaction">
    <interactant intactId="EBI-11741890">
        <id>Q86VK4-3</id>
    </interactant>
    <interactant intactId="EBI-5661036">
        <id>A1L4K1</id>
        <label>FSD2</label>
    </interactant>
    <organismsDiffer>false</organismsDiffer>
    <experiments>3</experiments>
</comment>
<comment type="interaction">
    <interactant intactId="EBI-11741890">
        <id>Q86VK4-3</id>
    </interactant>
    <interactant intactId="EBI-744302">
        <id>P14136</id>
        <label>GFAP</label>
    </interactant>
    <organismsDiffer>false</organismsDiffer>
    <experiments>3</experiments>
</comment>
<comment type="interaction">
    <interactant intactId="EBI-11741890">
        <id>Q86VK4-3</id>
    </interactant>
    <interactant intactId="EBI-374781">
        <id>O76003</id>
        <label>GLRX3</label>
    </interactant>
    <organismsDiffer>false</organismsDiffer>
    <experiments>3</experiments>
</comment>
<comment type="interaction">
    <interactant intactId="EBI-11741890">
        <id>Q86VK4-3</id>
    </interactant>
    <interactant intactId="EBI-5916454">
        <id>A6NEM1</id>
        <label>GOLGA6L9</label>
    </interactant>
    <organismsDiffer>false</organismsDiffer>
    <experiments>3</experiments>
</comment>
<comment type="interaction">
    <interactant intactId="EBI-11741890">
        <id>Q86VK4-3</id>
    </interactant>
    <interactant intactId="EBI-5329558">
        <id>P14652</id>
        <label>HOXB2</label>
    </interactant>
    <organismsDiffer>false</organismsDiffer>
    <experiments>3</experiments>
</comment>
<comment type="interaction">
    <interactant intactId="EBI-11741890">
        <id>Q86VK4-3</id>
    </interactant>
    <interactant intactId="EBI-10220600">
        <id>Q8NA54</id>
        <label>IQUB</label>
    </interactant>
    <organismsDiffer>false</organismsDiffer>
    <experiments>3</experiments>
</comment>
<comment type="interaction">
    <interactant intactId="EBI-11741890">
        <id>Q86VK4-3</id>
    </interactant>
    <interactant intactId="EBI-9658404">
        <id>Q5VVH5</id>
        <label>IRAK1BP1</label>
    </interactant>
    <organismsDiffer>false</organismsDiffer>
    <experiments>3</experiments>
</comment>
<comment type="interaction">
    <interactant intactId="EBI-11741890">
        <id>Q86VK4-3</id>
    </interactant>
    <interactant intactId="EBI-10171697">
        <id>Q6A162</id>
        <label>KRT40</label>
    </interactant>
    <organismsDiffer>false</organismsDiffer>
    <experiments>3</experiments>
</comment>
<comment type="interaction">
    <interactant intactId="EBI-11741890">
        <id>Q86VK4-3</id>
    </interactant>
    <interactant intactId="EBI-12864460">
        <id>P48059-3</id>
        <label>LIMS1</label>
    </interactant>
    <organismsDiffer>false</organismsDiffer>
    <experiments>3</experiments>
</comment>
<comment type="interaction">
    <interactant intactId="EBI-11741890">
        <id>Q86VK4-3</id>
    </interactant>
    <interactant intactId="EBI-11959475">
        <id>P25791-3</id>
        <label>LMO2</label>
    </interactant>
    <organismsDiffer>false</organismsDiffer>
    <experiments>5</experiments>
</comment>
<comment type="interaction">
    <interactant intactId="EBI-11741890">
        <id>Q86VK4-3</id>
    </interactant>
    <interactant intactId="EBI-2798728">
        <id>P61968</id>
        <label>LMO4</label>
    </interactant>
    <organismsDiffer>false</organismsDiffer>
    <experiments>3</experiments>
</comment>
<comment type="interaction">
    <interactant intactId="EBI-11741890">
        <id>Q86VK4-3</id>
    </interactant>
    <interactant intactId="EBI-473196">
        <id>Q5T3J3</id>
        <label>LRIF1</label>
    </interactant>
    <organismsDiffer>false</organismsDiffer>
    <experiments>3</experiments>
</comment>
<comment type="interaction">
    <interactant intactId="EBI-11741890">
        <id>Q86VK4-3</id>
    </interactant>
    <interactant intactId="EBI-2864512">
        <id>P50221</id>
        <label>MEOX1</label>
    </interactant>
    <organismsDiffer>false</organismsDiffer>
    <experiments>3</experiments>
</comment>
<comment type="interaction">
    <interactant intactId="EBI-11741890">
        <id>Q86VK4-3</id>
    </interactant>
    <interactant intactId="EBI-16439278">
        <id>Q6FHY5</id>
        <label>MEOX2</label>
    </interactant>
    <organismsDiffer>false</organismsDiffer>
    <experiments>3</experiments>
</comment>
<comment type="interaction">
    <interactant intactId="EBI-11741890">
        <id>Q86VK4-3</id>
    </interactant>
    <interactant intactId="EBI-10172526">
        <id>Q9UJV3-2</id>
        <label>MID2</label>
    </interactant>
    <organismsDiffer>false</organismsDiffer>
    <experiments>3</experiments>
</comment>
<comment type="interaction">
    <interactant intactId="EBI-11741890">
        <id>Q86VK4-3</id>
    </interactant>
    <interactant intactId="EBI-1246261">
        <id>O14561</id>
        <label>NDUFAB1</label>
    </interactant>
    <organismsDiffer>false</organismsDiffer>
    <experiments>3</experiments>
</comment>
<comment type="interaction">
    <interactant intactId="EBI-11741890">
        <id>Q86VK4-3</id>
    </interactant>
    <interactant intactId="EBI-713665">
        <id>P19404</id>
        <label>NDUFV2</label>
    </interactant>
    <organismsDiffer>false</organismsDiffer>
    <experiments>3</experiments>
</comment>
<comment type="interaction">
    <interactant intactId="EBI-11741890">
        <id>Q86VK4-3</id>
    </interactant>
    <interactant intactId="EBI-1051889">
        <id>Q9Y314</id>
        <label>NOSIP</label>
    </interactant>
    <organismsDiffer>false</organismsDiffer>
    <experiments>3</experiments>
</comment>
<comment type="interaction">
    <interactant intactId="EBI-11741890">
        <id>Q86VK4-3</id>
    </interactant>
    <interactant intactId="EBI-747278">
        <id>P26367</id>
        <label>PAX6</label>
    </interactant>
    <organismsDiffer>false</organismsDiffer>
    <experiments>3</experiments>
</comment>
<comment type="interaction">
    <interactant intactId="EBI-11741890">
        <id>Q86VK4-3</id>
    </interactant>
    <interactant intactId="EBI-9640281">
        <id>Q5VU43-2</id>
        <label>PDE4DIP</label>
    </interactant>
    <organismsDiffer>false</organismsDiffer>
    <experiments>3</experiments>
</comment>
<comment type="interaction">
    <interactant intactId="EBI-11741890">
        <id>Q86VK4-3</id>
    </interactant>
    <interactant intactId="EBI-79165">
        <id>Q9NRD5</id>
        <label>PICK1</label>
    </interactant>
    <organismsDiffer>false</organismsDiffer>
    <experiments>3</experiments>
</comment>
<comment type="interaction">
    <interactant intactId="EBI-11741890">
        <id>Q86VK4-3</id>
    </interactant>
    <interactant intactId="EBI-1389308">
        <id>Q7Z3K3</id>
        <label>POGZ</label>
    </interactant>
    <organismsDiffer>false</organismsDiffer>
    <experiments>3</experiments>
</comment>
<comment type="interaction">
    <interactant intactId="EBI-11741890">
        <id>Q86VK4-3</id>
    </interactant>
    <interactant intactId="EBI-347928">
        <id>P62487</id>
        <label>POLR2G</label>
    </interactant>
    <organismsDiffer>false</organismsDiffer>
    <experiments>3</experiments>
</comment>
<comment type="interaction">
    <interactant intactId="EBI-11741890">
        <id>Q86VK4-3</id>
    </interactant>
    <interactant intactId="EBI-12029004">
        <id>P78424</id>
        <label>POU6F2</label>
    </interactant>
    <organismsDiffer>false</organismsDiffer>
    <experiments>3</experiments>
</comment>
<comment type="interaction">
    <interactant intactId="EBI-11741890">
        <id>Q86VK4-3</id>
    </interactant>
    <interactant intactId="EBI-3923368">
        <id>Q8N3J5</id>
        <label>PPM1K</label>
    </interactant>
    <organismsDiffer>false</organismsDiffer>
    <experiments>3</experiments>
</comment>
<comment type="interaction">
    <interactant intactId="EBI-11741890">
        <id>Q86VK4-3</id>
    </interactant>
    <interactant intactId="EBI-10293968">
        <id>Q96T49</id>
        <label>PPP1R16B</label>
    </interactant>
    <organismsDiffer>false</organismsDiffer>
    <experiments>3</experiments>
</comment>
<comment type="interaction">
    <interactant intactId="EBI-11741890">
        <id>Q86VK4-3</id>
    </interactant>
    <interactant intactId="EBI-2805516">
        <id>P31321</id>
        <label>PRKAR1B</label>
    </interactant>
    <organismsDiffer>false</organismsDiffer>
    <experiments>3</experiments>
</comment>
<comment type="interaction">
    <interactant intactId="EBI-11741890">
        <id>Q86VK4-3</id>
    </interactant>
    <interactant intactId="EBI-11984839">
        <id>Q96QF0-7</id>
        <label>RAB3IP</label>
    </interactant>
    <organismsDiffer>false</organismsDiffer>
    <experiments>3</experiments>
</comment>
<comment type="interaction">
    <interactant intactId="EBI-11741890">
        <id>Q86VK4-3</id>
    </interactant>
    <interactant intactId="EBI-2845202">
        <id>Q86WH2</id>
        <label>RASSF3</label>
    </interactant>
    <organismsDiffer>false</organismsDiffer>
    <experiments>3</experiments>
</comment>
<comment type="interaction">
    <interactant intactId="EBI-11741890">
        <id>Q86VK4-3</id>
    </interactant>
    <interactant intactId="EBI-948278">
        <id>Q15293</id>
        <label>RCN1</label>
    </interactant>
    <organismsDiffer>false</organismsDiffer>
    <experiments>3</experiments>
</comment>
<comment type="interaction">
    <interactant intactId="EBI-11741890">
        <id>Q86VK4-3</id>
    </interactant>
    <interactant intactId="EBI-12840198">
        <id>Q96P16-3</id>
        <label>RPRD1A</label>
    </interactant>
    <organismsDiffer>false</organismsDiffer>
    <experiments>3</experiments>
</comment>
<comment type="interaction">
    <interactant intactId="EBI-11741890">
        <id>Q86VK4-3</id>
    </interactant>
    <interactant intactId="EBI-748601">
        <id>Q9UHV2</id>
        <label>SERTAD1</label>
    </interactant>
    <organismsDiffer>false</organismsDiffer>
    <experiments>3</experiments>
</comment>
<comment type="interaction">
    <interactant intactId="EBI-11741890">
        <id>Q86VK4-3</id>
    </interactant>
    <interactant intactId="EBI-1186119">
        <id>P51692</id>
        <label>STAT5B</label>
    </interactant>
    <organismsDiffer>false</organismsDiffer>
    <experiments>3</experiments>
</comment>
<comment type="interaction">
    <interactant intactId="EBI-11741890">
        <id>Q86VK4-3</id>
    </interactant>
    <interactant intactId="EBI-355744">
        <id>Q12933</id>
        <label>TRAF2</label>
    </interactant>
    <organismsDiffer>false</organismsDiffer>
    <experiments>3</experiments>
</comment>
<comment type="interaction">
    <interactant intactId="EBI-11741890">
        <id>Q86VK4-3</id>
    </interactant>
    <interactant intactId="EBI-17716262">
        <id>Q9UPQ4-2</id>
        <label>TRIM35</label>
    </interactant>
    <organismsDiffer>false</organismsDiffer>
    <experiments>3</experiments>
</comment>
<comment type="interaction">
    <interactant intactId="EBI-11741890">
        <id>Q86VK4-3</id>
    </interactant>
    <interactant intactId="EBI-744794">
        <id>Q9BZW7</id>
        <label>TSGA10</label>
    </interactant>
    <organismsDiffer>false</organismsDiffer>
    <experiments>3</experiments>
</comment>
<comment type="interaction">
    <interactant intactId="EBI-11741890">
        <id>Q86VK4-3</id>
    </interactant>
    <interactant intactId="EBI-9090990">
        <id>Q5W5X9-3</id>
        <label>TTC23</label>
    </interactant>
    <organismsDiffer>false</organismsDiffer>
    <experiments>3</experiments>
</comment>
<comment type="interaction">
    <interactant intactId="EBI-11741890">
        <id>Q86VK4-3</id>
    </interactant>
    <interactant intactId="EBI-12878912">
        <id>Q96PU4-2</id>
        <label>UHRF2</label>
    </interactant>
    <organismsDiffer>false</organismsDiffer>
    <experiments>3</experiments>
</comment>
<comment type="interaction">
    <interactant intactId="EBI-11741890">
        <id>Q86VK4-3</id>
    </interactant>
    <interactant intactId="EBI-357430">
        <id>P61758</id>
        <label>VBP1</label>
    </interactant>
    <organismsDiffer>false</organismsDiffer>
    <experiments>3</experiments>
</comment>
<comment type="interaction">
    <interactant intactId="EBI-11741890">
        <id>Q86VK4-3</id>
    </interactant>
    <interactant intactId="EBI-707773">
        <id>P17028</id>
        <label>ZNF24</label>
    </interactant>
    <organismsDiffer>false</organismsDiffer>
    <experiments>3</experiments>
</comment>
<comment type="interaction">
    <interactant intactId="EBI-11741890">
        <id>Q86VK4-3</id>
    </interactant>
    <interactant intactId="EBI-10266435">
        <id>Q8N5D4</id>
    </interactant>
    <organismsDiffer>false</organismsDiffer>
    <experiments>3</experiments>
</comment>
<comment type="subcellular location">
    <subcellularLocation>
        <location evidence="12 13">Nucleus</location>
    </subcellularLocation>
    <subcellularLocation>
        <location evidence="5 6">Chromosome</location>
    </subcellularLocation>
    <text evidence="5 6">Directly binds to the sequence motif 5'-CATCCCATAATA-3'.</text>
</comment>
<comment type="alternative products">
    <event type="alternative splicing"/>
    <isoform>
        <id>Q86VK4-1</id>
        <name>1</name>
        <sequence type="displayed"/>
    </isoform>
    <isoform>
        <id>Q86VK4-2</id>
        <name>2</name>
        <sequence type="described" ref="VSP_008485 VSP_008486"/>
    </isoform>
    <isoform>
        <id>Q86VK4-3</id>
        <name>3</name>
        <sequence type="described" ref="VSP_008487"/>
    </isoform>
    <isoform>
        <id>Q86VK4-4</id>
        <name>4</name>
        <sequence type="described" ref="VSP_042424"/>
    </isoform>
    <isoform>
        <id>Q86VK4-5</id>
        <name>5</name>
        <sequence type="described" ref="VSP_043417 VSP_043418"/>
    </isoform>
</comment>
<comment type="tissue specificity">
    <text evidence="3">Widely expressed.</text>
</comment>
<comment type="induction">
    <text evidence="3">During fibroblast senescence.</text>
</comment>
<comment type="domain">
    <text evidence="5">The five zinc finger domains are necessary and sufficient to bind to DNA.</text>
</comment>
<comment type="PTM">
    <text evidence="3">Sumoylated (PubMed:12370286). Sumoylation increases its half-life, possibly by blocking ubiquitin-mediated degradation (PubMed:12370286).</text>
</comment>
<comment type="PTM">
    <text evidence="4">O-glycosylated (PubMed:30078215). O-GlcNAcylation may occur in response to increasing glucose levels and affect transcription factor activity (PubMed:30078215).</text>
</comment>
<comment type="miscellaneous">
    <molecule>Isoform 2</molecule>
    <text evidence="11">May be produced at very low levels due to a premature stop codon in the mRNA, leading to nonsense-mediated mRNA decay.</text>
</comment>
<name>ZN410_HUMAN</name>
<reference key="1">
    <citation type="journal article" date="1997" name="Genome Res.">
        <title>Large-scale concatenation cDNA sequencing.</title>
        <authorList>
            <person name="Yu W."/>
            <person name="Andersson B."/>
            <person name="Worley K.C."/>
            <person name="Muzny D.M."/>
            <person name="Ding Y."/>
            <person name="Liu W."/>
            <person name="Ricafrente J.Y."/>
            <person name="Wentland M.A."/>
            <person name="Lennon G."/>
            <person name="Gibbs R.A."/>
        </authorList>
    </citation>
    <scope>NUCLEOTIDE SEQUENCE [LARGE SCALE MRNA] (ISOFORM 1)</scope>
    <source>
        <tissue>Brain</tissue>
    </source>
</reference>
<reference key="2">
    <citation type="journal article" date="2004" name="Genome Res.">
        <title>The status, quality, and expansion of the NIH full-length cDNA project: the Mammalian Gene Collection (MGC).</title>
        <authorList>
            <consortium name="The MGC Project Team"/>
        </authorList>
    </citation>
    <scope>NUCLEOTIDE SEQUENCE [LARGE SCALE MRNA] (ISOFORMS 2 AND 3)</scope>
    <source>
        <tissue>Lung</tissue>
    </source>
</reference>
<reference key="3">
    <citation type="journal article" date="2002" name="Mol. Cell. Biol.">
        <title>Induction of extracellular matrix-remodeling genes by the senescence-associated protein APA-1.</title>
        <authorList>
            <person name="Benanti J.A."/>
            <person name="Williams D.K."/>
            <person name="Robinson K.L."/>
            <person name="Ozer H.L."/>
            <person name="Galloway D.A."/>
        </authorList>
    </citation>
    <scope>FUNCTION</scope>
    <scope>SUMOYLATION</scope>
    <scope>INDUCTION</scope>
    <scope>TISSUE SPECIFICITY</scope>
    <scope>INTERACTION WITH CDKN2A</scope>
</reference>
<reference key="4">
    <citation type="journal article" date="2004" name="Nat. Genet.">
        <title>Complete sequencing and characterization of 21,243 full-length human cDNAs.</title>
        <authorList>
            <person name="Ota T."/>
            <person name="Suzuki Y."/>
            <person name="Nishikawa T."/>
            <person name="Otsuki T."/>
            <person name="Sugiyama T."/>
            <person name="Irie R."/>
            <person name="Wakamatsu A."/>
            <person name="Hayashi K."/>
            <person name="Sato H."/>
            <person name="Nagai K."/>
            <person name="Kimura K."/>
            <person name="Makita H."/>
            <person name="Sekine M."/>
            <person name="Obayashi M."/>
            <person name="Nishi T."/>
            <person name="Shibahara T."/>
            <person name="Tanaka T."/>
            <person name="Ishii S."/>
            <person name="Yamamoto J."/>
            <person name="Saito K."/>
            <person name="Kawai Y."/>
            <person name="Isono Y."/>
            <person name="Nakamura Y."/>
            <person name="Nagahari K."/>
            <person name="Murakami K."/>
            <person name="Yasuda T."/>
            <person name="Iwayanagi T."/>
            <person name="Wagatsuma M."/>
            <person name="Shiratori A."/>
            <person name="Sudo H."/>
            <person name="Hosoiri T."/>
            <person name="Kaku Y."/>
            <person name="Kodaira H."/>
            <person name="Kondo H."/>
            <person name="Sugawara M."/>
            <person name="Takahashi M."/>
            <person name="Kanda K."/>
            <person name="Yokoi T."/>
            <person name="Furuya T."/>
            <person name="Kikkawa E."/>
            <person name="Omura Y."/>
            <person name="Abe K."/>
            <person name="Kamihara K."/>
            <person name="Katsuta N."/>
            <person name="Sato K."/>
            <person name="Tanikawa M."/>
            <person name="Yamazaki M."/>
            <person name="Ninomiya K."/>
            <person name="Ishibashi T."/>
            <person name="Yamashita H."/>
            <person name="Murakawa K."/>
            <person name="Fujimori K."/>
            <person name="Tanai H."/>
            <person name="Kimata M."/>
            <person name="Watanabe M."/>
            <person name="Hiraoka S."/>
            <person name="Chiba Y."/>
            <person name="Ishida S."/>
            <person name="Ono Y."/>
            <person name="Takiguchi S."/>
            <person name="Watanabe S."/>
            <person name="Yosida M."/>
            <person name="Hotuta T."/>
            <person name="Kusano J."/>
            <person name="Kanehori K."/>
            <person name="Takahashi-Fujii A."/>
            <person name="Hara H."/>
            <person name="Tanase T.-O."/>
            <person name="Nomura Y."/>
            <person name="Togiya S."/>
            <person name="Komai F."/>
            <person name="Hara R."/>
            <person name="Takeuchi K."/>
            <person name="Arita M."/>
            <person name="Imose N."/>
            <person name="Musashino K."/>
            <person name="Yuuki H."/>
            <person name="Oshima A."/>
            <person name="Sasaki N."/>
            <person name="Aotsuka S."/>
            <person name="Yoshikawa Y."/>
            <person name="Matsunawa H."/>
            <person name="Ichihara T."/>
            <person name="Shiohata N."/>
            <person name="Sano S."/>
            <person name="Moriya S."/>
            <person name="Momiyama H."/>
            <person name="Satoh N."/>
            <person name="Takami S."/>
            <person name="Terashima Y."/>
            <person name="Suzuki O."/>
            <person name="Nakagawa S."/>
            <person name="Senoh A."/>
            <person name="Mizoguchi H."/>
            <person name="Goto Y."/>
            <person name="Shimizu F."/>
            <person name="Wakebe H."/>
            <person name="Hishigaki H."/>
            <person name="Watanabe T."/>
            <person name="Sugiyama A."/>
            <person name="Takemoto M."/>
            <person name="Kawakami B."/>
            <person name="Yamazaki M."/>
            <person name="Watanabe K."/>
            <person name="Kumagai A."/>
            <person name="Itakura S."/>
            <person name="Fukuzumi Y."/>
            <person name="Fujimori Y."/>
            <person name="Komiyama M."/>
            <person name="Tashiro H."/>
            <person name="Tanigami A."/>
            <person name="Fujiwara T."/>
            <person name="Ono T."/>
            <person name="Yamada K."/>
            <person name="Fujii Y."/>
            <person name="Ozaki K."/>
            <person name="Hirao M."/>
            <person name="Ohmori Y."/>
            <person name="Kawabata A."/>
            <person name="Hikiji T."/>
            <person name="Kobatake N."/>
            <person name="Inagaki H."/>
            <person name="Ikema Y."/>
            <person name="Okamoto S."/>
            <person name="Okitani R."/>
            <person name="Kawakami T."/>
            <person name="Noguchi S."/>
            <person name="Itoh T."/>
            <person name="Shigeta K."/>
            <person name="Senba T."/>
            <person name="Matsumura K."/>
            <person name="Nakajima Y."/>
            <person name="Mizuno T."/>
            <person name="Morinaga M."/>
            <person name="Sasaki M."/>
            <person name="Togashi T."/>
            <person name="Oyama M."/>
            <person name="Hata H."/>
            <person name="Watanabe M."/>
            <person name="Komatsu T."/>
            <person name="Mizushima-Sugano J."/>
            <person name="Satoh T."/>
            <person name="Shirai Y."/>
            <person name="Takahashi Y."/>
            <person name="Nakagawa K."/>
            <person name="Okumura K."/>
            <person name="Nagase T."/>
            <person name="Nomura N."/>
            <person name="Kikuchi H."/>
            <person name="Masuho Y."/>
            <person name="Yamashita R."/>
            <person name="Nakai K."/>
            <person name="Yada T."/>
            <person name="Nakamura Y."/>
            <person name="Ohara O."/>
            <person name="Isogai T."/>
            <person name="Sugano S."/>
        </authorList>
    </citation>
    <scope>NUCLEOTIDE SEQUENCE [LARGE SCALE MRNA] (ISOFORMS 4 AND 5)</scope>
    <source>
        <tissue>Urinary bladder</tissue>
    </source>
</reference>
<reference key="5">
    <citation type="journal article" date="2003" name="Nature">
        <title>The DNA sequence and analysis of human chromosome 14.</title>
        <authorList>
            <person name="Heilig R."/>
            <person name="Eckenberg R."/>
            <person name="Petit J.-L."/>
            <person name="Fonknechten N."/>
            <person name="Da Silva C."/>
            <person name="Cattolico L."/>
            <person name="Levy M."/>
            <person name="Barbe V."/>
            <person name="De Berardinis V."/>
            <person name="Ureta-Vidal A."/>
            <person name="Pelletier E."/>
            <person name="Vico V."/>
            <person name="Anthouard V."/>
            <person name="Rowen L."/>
            <person name="Madan A."/>
            <person name="Qin S."/>
            <person name="Sun H."/>
            <person name="Du H."/>
            <person name="Pepin K."/>
            <person name="Artiguenave F."/>
            <person name="Robert C."/>
            <person name="Cruaud C."/>
            <person name="Bruels T."/>
            <person name="Jaillon O."/>
            <person name="Friedlander L."/>
            <person name="Samson G."/>
            <person name="Brottier P."/>
            <person name="Cure S."/>
            <person name="Segurens B."/>
            <person name="Aniere F."/>
            <person name="Samain S."/>
            <person name="Crespeau H."/>
            <person name="Abbasi N."/>
            <person name="Aiach N."/>
            <person name="Boscus D."/>
            <person name="Dickhoff R."/>
            <person name="Dors M."/>
            <person name="Dubois I."/>
            <person name="Friedman C."/>
            <person name="Gouyvenoux M."/>
            <person name="James R."/>
            <person name="Madan A."/>
            <person name="Mairey-Estrada B."/>
            <person name="Mangenot S."/>
            <person name="Martins N."/>
            <person name="Menard M."/>
            <person name="Oztas S."/>
            <person name="Ratcliffe A."/>
            <person name="Shaffer T."/>
            <person name="Trask B."/>
            <person name="Vacherie B."/>
            <person name="Bellemere C."/>
            <person name="Belser C."/>
            <person name="Besnard-Gonnet M."/>
            <person name="Bartol-Mavel D."/>
            <person name="Boutard M."/>
            <person name="Briez-Silla S."/>
            <person name="Combette S."/>
            <person name="Dufosse-Laurent V."/>
            <person name="Ferron C."/>
            <person name="Lechaplais C."/>
            <person name="Louesse C."/>
            <person name="Muselet D."/>
            <person name="Magdelenat G."/>
            <person name="Pateau E."/>
            <person name="Petit E."/>
            <person name="Sirvain-Trukniewicz P."/>
            <person name="Trybou A."/>
            <person name="Vega-Czarny N."/>
            <person name="Bataille E."/>
            <person name="Bluet E."/>
            <person name="Bordelais I."/>
            <person name="Dubois M."/>
            <person name="Dumont C."/>
            <person name="Guerin T."/>
            <person name="Haffray S."/>
            <person name="Hammadi R."/>
            <person name="Muanga J."/>
            <person name="Pellouin V."/>
            <person name="Robert D."/>
            <person name="Wunderle E."/>
            <person name="Gauguet G."/>
            <person name="Roy A."/>
            <person name="Sainte-Marthe L."/>
            <person name="Verdier J."/>
            <person name="Verdier-Discala C."/>
            <person name="Hillier L.W."/>
            <person name="Fulton L."/>
            <person name="McPherson J."/>
            <person name="Matsuda F."/>
            <person name="Wilson R."/>
            <person name="Scarpelli C."/>
            <person name="Gyapay G."/>
            <person name="Wincker P."/>
            <person name="Saurin W."/>
            <person name="Quetier F."/>
            <person name="Waterston R."/>
            <person name="Hood L."/>
            <person name="Weissenbach J."/>
        </authorList>
    </citation>
    <scope>NUCLEOTIDE SEQUENCE [LARGE SCALE GENOMIC DNA]</scope>
</reference>
<reference key="6">
    <citation type="journal article" date="2018" name="J. Cell. Physiol.">
        <title>High glucose stimulates proliferative capacity of liver cancer cells possibly via O-GlcNAcylation-dependent transcriptional regulation of GJC1.</title>
        <authorList>
            <person name="Chen Y."/>
            <person name="Liu R."/>
            <person name="Chu Z."/>
            <person name="Le B."/>
            <person name="Zeng H."/>
            <person name="Zhang X."/>
            <person name="Wu Q."/>
            <person name="Zhu G."/>
            <person name="Chen Y."/>
            <person name="Liu Y."/>
            <person name="Sun F."/>
            <person name="Lu Z."/>
            <person name="Qiao Y."/>
            <person name="Wang J."/>
        </authorList>
    </citation>
    <scope>FUNCTION</scope>
    <scope>GLYCOSYLATION</scope>
</reference>
<reference key="7">
    <citation type="journal article" date="2021" name="Nat. Genet.">
        <title>ZNF410 represses fetal globin by singular control of CHD4.</title>
        <authorList>
            <person name="Vinjamur D.S."/>
            <person name="Yao Q."/>
            <person name="Cole M.A."/>
            <person name="McGuckin C."/>
            <person name="Ren C."/>
            <person name="Zeng J."/>
            <person name="Hossain M."/>
            <person name="Luk K."/>
            <person name="Wolfe S.A."/>
            <person name="Pinello L."/>
            <person name="Bauer D.E."/>
        </authorList>
    </citation>
    <scope>FUNCTION</scope>
    <scope>SUBCELLULAR LOCATION</scope>
</reference>
<reference key="8">
    <citation type="journal article" date="2021" name="Mol. Cell">
        <title>ZNF410 uniquely activates the NuRD component CHD4 to silence fetal hemoglobin expression.</title>
        <authorList>
            <person name="Lan X."/>
            <person name="Ren R."/>
            <person name="Feng R."/>
            <person name="Ly L.C."/>
            <person name="Lan Y."/>
            <person name="Zhang Z."/>
            <person name="Aboreden N."/>
            <person name="Qin K."/>
            <person name="Horton J.R."/>
            <person name="Grevet J.D."/>
            <person name="Mayuranathan T."/>
            <person name="Abdulmalik O."/>
            <person name="Keller C.A."/>
            <person name="Giardine B."/>
            <person name="Hardison R.C."/>
            <person name="Crossley M."/>
            <person name="Weiss M.J."/>
            <person name="Cheng X."/>
            <person name="Shi J."/>
            <person name="Blobel G.A."/>
        </authorList>
    </citation>
    <scope>X-RAY CRYSTALLOGRAPHY (2.75 ANGSTROMS) OF 217-362 IN COMPLEX WITH DNA AND ZINC</scope>
    <scope>FUNCTION</scope>
    <scope>SUBCELLULAR LOCATION</scope>
    <scope>DOMAIN</scope>
</reference>
<protein>
    <recommendedName>
        <fullName evidence="11">Zinc finger protein 410</fullName>
    </recommendedName>
    <alternativeName>
        <fullName evidence="7">Another partner for ARF 1</fullName>
    </alternativeName>
</protein>
<keyword id="KW-0002">3D-structure</keyword>
<keyword id="KW-0010">Activator</keyword>
<keyword id="KW-0025">Alternative splicing</keyword>
<keyword id="KW-0158">Chromosome</keyword>
<keyword id="KW-0238">DNA-binding</keyword>
<keyword id="KW-0325">Glycoprotein</keyword>
<keyword id="KW-0479">Metal-binding</keyword>
<keyword id="KW-0539">Nucleus</keyword>
<keyword id="KW-1267">Proteomics identification</keyword>
<keyword id="KW-1185">Reference proteome</keyword>
<keyword id="KW-0677">Repeat</keyword>
<keyword id="KW-0804">Transcription</keyword>
<keyword id="KW-0805">Transcription regulation</keyword>
<keyword id="KW-0832">Ubl conjugation</keyword>
<keyword id="KW-0862">Zinc</keyword>
<keyword id="KW-0863">Zinc-finger</keyword>
<accession>Q86VK4</accession>
<accession>B4DDV5</accession>
<accession>B4DR78</accession>
<accession>O00153</accession>
<accession>Q9BQ19</accession>
<proteinExistence type="evidence at protein level"/>
<evidence type="ECO:0000255" key="1">
    <source>
        <dbReference type="PROSITE-ProRule" id="PRU00042"/>
    </source>
</evidence>
<evidence type="ECO:0000256" key="2">
    <source>
        <dbReference type="SAM" id="MobiDB-lite"/>
    </source>
</evidence>
<evidence type="ECO:0000269" key="3">
    <source>
    </source>
</evidence>
<evidence type="ECO:0000269" key="4">
    <source>
    </source>
</evidence>
<evidence type="ECO:0000269" key="5">
    <source>
    </source>
</evidence>
<evidence type="ECO:0000269" key="6">
    <source>
    </source>
</evidence>
<evidence type="ECO:0000303" key="7">
    <source>
    </source>
</evidence>
<evidence type="ECO:0000303" key="8">
    <source>
    </source>
</evidence>
<evidence type="ECO:0000303" key="9">
    <source>
    </source>
</evidence>
<evidence type="ECO:0000303" key="10">
    <source>
    </source>
</evidence>
<evidence type="ECO:0000305" key="11"/>
<evidence type="ECO:0000305" key="12">
    <source>
    </source>
</evidence>
<evidence type="ECO:0000305" key="13">
    <source>
    </source>
</evidence>
<evidence type="ECO:0000312" key="14">
    <source>
        <dbReference type="HGNC" id="HGNC:20144"/>
    </source>
</evidence>
<evidence type="ECO:0007744" key="15">
    <source>
        <dbReference type="PDB" id="6WMI"/>
    </source>
</evidence>
<evidence type="ECO:0007829" key="16">
    <source>
        <dbReference type="PDB" id="6WMI"/>
    </source>
</evidence>
<sequence length="478" mass="52113">MLSDELESKPELLVQFVQNTSIPLGQGLVESEAKDITCLSLLPVTEASECSRLMLPDDTTNHSNSSKEVPSSAVLRSLRVNVGPDGEETRAQTVQKSPEFLSTSESSSLLQDLQPSDSTSFILLNLTRAGLGSSAEHLVFVQDEAEDSGNDFLSSESTDSSIPWFLRVQELAHDSLIAATRAQLAKNAKTSSNGENVHLGSGDGQSKDSGPLPQVEKKLKCTVEGCDRTFVWPAHFKYHLKTHRNDRSFICPAEGCGKSFYVLQRLKVHMRTHNGEKPFMCHESGCGKQFTTAGNLKNHRRIHTGEKPFLCEAQGCGRSFAEYSSLRKHLVVHSGEKPHQCQVCGKTFSQSGSRNVHMRKHHLQLGAAGSQEQEQTAEPLMGSSLLEEASVPSKNLVSMNSQPSLGGESLNLPNTNSILGVDDEVLAEGSPRSLSSVPDVTHHLVTMQSGRQSYEVSVLTAVNPQELLNQGDLTERRT</sequence>
<dbReference type="EMBL" id="U90919">
    <property type="protein sequence ID" value="AAB51059.1"/>
    <property type="molecule type" value="mRNA"/>
</dbReference>
<dbReference type="EMBL" id="AK293350">
    <property type="protein sequence ID" value="BAG56866.1"/>
    <property type="molecule type" value="mRNA"/>
</dbReference>
<dbReference type="EMBL" id="AK299138">
    <property type="protein sequence ID" value="BAG61190.1"/>
    <property type="molecule type" value="mRNA"/>
</dbReference>
<dbReference type="EMBL" id="AC005480">
    <property type="status" value="NOT_ANNOTATED_CDS"/>
    <property type="molecule type" value="Genomic_DNA"/>
</dbReference>
<dbReference type="EMBL" id="AC005520">
    <property type="status" value="NOT_ANNOTATED_CDS"/>
    <property type="molecule type" value="Genomic_DNA"/>
</dbReference>
<dbReference type="EMBL" id="BC000330">
    <property type="status" value="NOT_ANNOTATED_CDS"/>
    <property type="molecule type" value="mRNA"/>
</dbReference>
<dbReference type="EMBL" id="BC004357">
    <property type="status" value="NOT_ANNOTATED_CDS"/>
    <property type="molecule type" value="mRNA"/>
</dbReference>
<dbReference type="EMBL" id="BC050683">
    <property type="protein sequence ID" value="AAH50683.1"/>
    <property type="molecule type" value="mRNA"/>
</dbReference>
<dbReference type="CCDS" id="CCDS55929.1">
    <molecule id="Q86VK4-5"/>
</dbReference>
<dbReference type="CCDS" id="CCDS55930.1">
    <molecule id="Q86VK4-3"/>
</dbReference>
<dbReference type="CCDS" id="CCDS55931.1">
    <molecule id="Q86VK4-4"/>
</dbReference>
<dbReference type="CCDS" id="CCDS9821.1">
    <molecule id="Q86VK4-1"/>
</dbReference>
<dbReference type="RefSeq" id="NP_001229853.1">
    <molecule id="Q86VK4-5"/>
    <property type="nucleotide sequence ID" value="NM_001242924.2"/>
</dbReference>
<dbReference type="RefSeq" id="NP_001229855.1">
    <molecule id="Q86VK4-3"/>
    <property type="nucleotide sequence ID" value="NM_001242926.2"/>
</dbReference>
<dbReference type="RefSeq" id="NP_001229856.1">
    <molecule id="Q86VK4-4"/>
    <property type="nucleotide sequence ID" value="NM_001242927.2"/>
</dbReference>
<dbReference type="RefSeq" id="NP_067011.1">
    <molecule id="Q86VK4-1"/>
    <property type="nucleotide sequence ID" value="NM_021188.3"/>
</dbReference>
<dbReference type="PDB" id="6WMI">
    <property type="method" value="X-ray"/>
    <property type="resolution" value="2.75 A"/>
    <property type="chains" value="A/D=217-366"/>
</dbReference>
<dbReference type="PDBsum" id="6WMI"/>
<dbReference type="SASBDB" id="Q86VK4"/>
<dbReference type="SMR" id="Q86VK4"/>
<dbReference type="BioGRID" id="121792">
    <property type="interactions" value="55"/>
</dbReference>
<dbReference type="FunCoup" id="Q86VK4">
    <property type="interactions" value="3183"/>
</dbReference>
<dbReference type="IntAct" id="Q86VK4">
    <property type="interactions" value="67"/>
</dbReference>
<dbReference type="MINT" id="Q86VK4"/>
<dbReference type="STRING" id="9606.ENSP00000407130"/>
<dbReference type="GlyGen" id="Q86VK4">
    <property type="glycosylation" value="2 sites, 1 N-linked glycan (1 site), 1 O-linked glycan (1 site)"/>
</dbReference>
<dbReference type="iPTMnet" id="Q86VK4"/>
<dbReference type="PhosphoSitePlus" id="Q86VK4"/>
<dbReference type="BioMuta" id="ZNF410"/>
<dbReference type="DMDM" id="37538029"/>
<dbReference type="jPOST" id="Q86VK4"/>
<dbReference type="MassIVE" id="Q86VK4"/>
<dbReference type="PaxDb" id="9606-ENSP00000407130"/>
<dbReference type="PeptideAtlas" id="Q86VK4"/>
<dbReference type="ProteomicsDB" id="70028">
    <molecule id="Q86VK4-1"/>
</dbReference>
<dbReference type="ProteomicsDB" id="70029">
    <molecule id="Q86VK4-2"/>
</dbReference>
<dbReference type="ProteomicsDB" id="70030">
    <molecule id="Q86VK4-3"/>
</dbReference>
<dbReference type="ProteomicsDB" id="70031">
    <molecule id="Q86VK4-4"/>
</dbReference>
<dbReference type="ProteomicsDB" id="70032">
    <molecule id="Q86VK4-5"/>
</dbReference>
<dbReference type="Antibodypedia" id="126">
    <property type="antibodies" value="186 antibodies from 20 providers"/>
</dbReference>
<dbReference type="DNASU" id="57862"/>
<dbReference type="Ensembl" id="ENST00000324593.10">
    <molecule id="Q86VK4-3"/>
    <property type="protein sequence ID" value="ENSP00000323293.6"/>
    <property type="gene ID" value="ENSG00000119725.21"/>
</dbReference>
<dbReference type="Ensembl" id="ENST00000398139.7">
    <molecule id="Q86VK4-2"/>
    <property type="protein sequence ID" value="ENSP00000381208.3"/>
    <property type="gene ID" value="ENSG00000119725.21"/>
</dbReference>
<dbReference type="Ensembl" id="ENST00000442160.7">
    <molecule id="Q86VK4-5"/>
    <property type="protein sequence ID" value="ENSP00000407130.3"/>
    <property type="gene ID" value="ENSG00000119725.21"/>
</dbReference>
<dbReference type="Ensembl" id="ENST00000540593.5">
    <molecule id="Q86VK4-4"/>
    <property type="protein sequence ID" value="ENSP00000442228.1"/>
    <property type="gene ID" value="ENSG00000119725.21"/>
</dbReference>
<dbReference type="Ensembl" id="ENST00000555044.6">
    <molecule id="Q86VK4-1"/>
    <property type="protein sequence ID" value="ENSP00000451763.2"/>
    <property type="gene ID" value="ENSG00000119725.21"/>
</dbReference>
<dbReference type="Ensembl" id="ENST00000615736.4">
    <molecule id="Q86VK4-5"/>
    <property type="protein sequence ID" value="ENSP00000483073.1"/>
    <property type="gene ID" value="ENSG00000119725.21"/>
</dbReference>
<dbReference type="GeneID" id="57862"/>
<dbReference type="KEGG" id="hsa:57862"/>
<dbReference type="MANE-Select" id="ENST00000555044.6">
    <property type="protein sequence ID" value="ENSP00000451763.2"/>
    <property type="RefSeq nucleotide sequence ID" value="NM_021188.3"/>
    <property type="RefSeq protein sequence ID" value="NP_067011.1"/>
</dbReference>
<dbReference type="UCSC" id="uc001xoz.3">
    <molecule id="Q86VK4-1"/>
    <property type="organism name" value="human"/>
</dbReference>
<dbReference type="AGR" id="HGNC:20144"/>
<dbReference type="CTD" id="57862"/>
<dbReference type="DisGeNET" id="57862"/>
<dbReference type="GeneCards" id="ZNF410"/>
<dbReference type="HGNC" id="HGNC:20144">
    <property type="gene designation" value="ZNF410"/>
</dbReference>
<dbReference type="HPA" id="ENSG00000119725">
    <property type="expression patterns" value="Low tissue specificity"/>
</dbReference>
<dbReference type="MIM" id="619427">
    <property type="type" value="gene"/>
</dbReference>
<dbReference type="neXtProt" id="NX_Q86VK4"/>
<dbReference type="PharmGKB" id="PA134958929"/>
<dbReference type="VEuPathDB" id="HostDB:ENSG00000119725"/>
<dbReference type="eggNOG" id="KOG1721">
    <property type="taxonomic scope" value="Eukaryota"/>
</dbReference>
<dbReference type="GeneTree" id="ENSGT00940000158098"/>
<dbReference type="HOGENOM" id="CLU_043629_1_0_1"/>
<dbReference type="InParanoid" id="Q86VK4"/>
<dbReference type="OMA" id="XNDRSFI"/>
<dbReference type="OrthoDB" id="5977959at2759"/>
<dbReference type="PAN-GO" id="Q86VK4">
    <property type="GO annotations" value="3 GO annotations based on evolutionary models"/>
</dbReference>
<dbReference type="PhylomeDB" id="Q86VK4"/>
<dbReference type="TreeFam" id="TF333498"/>
<dbReference type="PathwayCommons" id="Q86VK4"/>
<dbReference type="SignaLink" id="Q86VK4"/>
<dbReference type="BioGRID-ORCS" id="57862">
    <property type="hits" value="22 hits in 1189 CRISPR screens"/>
</dbReference>
<dbReference type="ChiTaRS" id="ZNF410">
    <property type="organism name" value="human"/>
</dbReference>
<dbReference type="GenomeRNAi" id="57862"/>
<dbReference type="Pharos" id="Q86VK4">
    <property type="development level" value="Tbio"/>
</dbReference>
<dbReference type="PRO" id="PR:Q86VK4"/>
<dbReference type="Proteomes" id="UP000005640">
    <property type="component" value="Chromosome 14"/>
</dbReference>
<dbReference type="RNAct" id="Q86VK4">
    <property type="molecule type" value="protein"/>
</dbReference>
<dbReference type="Bgee" id="ENSG00000119725">
    <property type="expression patterns" value="Expressed in islet of Langerhans and 99 other cell types or tissues"/>
</dbReference>
<dbReference type="ExpressionAtlas" id="Q86VK4">
    <property type="expression patterns" value="baseline and differential"/>
</dbReference>
<dbReference type="GO" id="GO:0005694">
    <property type="term" value="C:chromosome"/>
    <property type="evidence" value="ECO:0007669"/>
    <property type="project" value="UniProtKB-SubCell"/>
</dbReference>
<dbReference type="GO" id="GO:0005634">
    <property type="term" value="C:nucleus"/>
    <property type="evidence" value="ECO:0000318"/>
    <property type="project" value="GO_Central"/>
</dbReference>
<dbReference type="GO" id="GO:0003700">
    <property type="term" value="F:DNA-binding transcription factor activity"/>
    <property type="evidence" value="ECO:0000314"/>
    <property type="project" value="UniProt"/>
</dbReference>
<dbReference type="GO" id="GO:0000978">
    <property type="term" value="F:RNA polymerase II cis-regulatory region sequence-specific DNA binding"/>
    <property type="evidence" value="ECO:0000315"/>
    <property type="project" value="UniProtKB"/>
</dbReference>
<dbReference type="GO" id="GO:1990837">
    <property type="term" value="F:sequence-specific double-stranded DNA binding"/>
    <property type="evidence" value="ECO:0000314"/>
    <property type="project" value="ARUK-UCL"/>
</dbReference>
<dbReference type="GO" id="GO:0003712">
    <property type="term" value="F:transcription coregulator activity"/>
    <property type="evidence" value="ECO:0000318"/>
    <property type="project" value="GO_Central"/>
</dbReference>
<dbReference type="GO" id="GO:0008270">
    <property type="term" value="F:zinc ion binding"/>
    <property type="evidence" value="ECO:0007669"/>
    <property type="project" value="UniProtKB-KW"/>
</dbReference>
<dbReference type="GO" id="GO:0010629">
    <property type="term" value="P:negative regulation of gene expression"/>
    <property type="evidence" value="ECO:0000315"/>
    <property type="project" value="UniProtKB"/>
</dbReference>
<dbReference type="GO" id="GO:0045944">
    <property type="term" value="P:positive regulation of transcription by RNA polymerase II"/>
    <property type="evidence" value="ECO:0000314"/>
    <property type="project" value="UniProt"/>
</dbReference>
<dbReference type="GO" id="GO:0006357">
    <property type="term" value="P:regulation of transcription by RNA polymerase II"/>
    <property type="evidence" value="ECO:0000318"/>
    <property type="project" value="GO_Central"/>
</dbReference>
<dbReference type="FunFam" id="3.30.160.60:FF:000071">
    <property type="entry name" value="Putative zinc finger protein 143"/>
    <property type="match status" value="1"/>
</dbReference>
<dbReference type="FunFam" id="3.30.160.60:FF:000221">
    <property type="entry name" value="Zinc finger protein 410"/>
    <property type="match status" value="1"/>
</dbReference>
<dbReference type="FunFam" id="3.30.160.60:FF:000462">
    <property type="entry name" value="Zinc finger protein 410"/>
    <property type="match status" value="1"/>
</dbReference>
<dbReference type="FunFam" id="3.30.160.60:FF:000441">
    <property type="entry name" value="zinc finger protein 410 isoform X1"/>
    <property type="match status" value="1"/>
</dbReference>
<dbReference type="Gene3D" id="3.30.160.60">
    <property type="entry name" value="Classic Zinc Finger"/>
    <property type="match status" value="5"/>
</dbReference>
<dbReference type="InterPro" id="IPR036236">
    <property type="entry name" value="Znf_C2H2_sf"/>
</dbReference>
<dbReference type="InterPro" id="IPR013087">
    <property type="entry name" value="Znf_C2H2_type"/>
</dbReference>
<dbReference type="PANTHER" id="PTHR14003">
    <property type="entry name" value="TRANSCRIPTIONAL REPRESSOR PROTEIN YY"/>
    <property type="match status" value="1"/>
</dbReference>
<dbReference type="PANTHER" id="PTHR14003:SF19">
    <property type="entry name" value="YY2 TRANSCRIPTION FACTOR"/>
    <property type="match status" value="1"/>
</dbReference>
<dbReference type="Pfam" id="PF00096">
    <property type="entry name" value="zf-C2H2"/>
    <property type="match status" value="4"/>
</dbReference>
<dbReference type="SMART" id="SM00355">
    <property type="entry name" value="ZnF_C2H2"/>
    <property type="match status" value="5"/>
</dbReference>
<dbReference type="SUPFAM" id="SSF57667">
    <property type="entry name" value="beta-beta-alpha zinc fingers"/>
    <property type="match status" value="3"/>
</dbReference>
<dbReference type="PROSITE" id="PS00028">
    <property type="entry name" value="ZINC_FINGER_C2H2_1"/>
    <property type="match status" value="5"/>
</dbReference>
<dbReference type="PROSITE" id="PS50157">
    <property type="entry name" value="ZINC_FINGER_C2H2_2"/>
    <property type="match status" value="5"/>
</dbReference>
<feature type="chain" id="PRO_0000047571" description="Zinc finger protein 410">
    <location>
        <begin position="1"/>
        <end position="478"/>
    </location>
</feature>
<feature type="zinc finger region" description="C2H2-type 1" evidence="1">
    <location>
        <begin position="219"/>
        <end position="243"/>
    </location>
</feature>
<feature type="zinc finger region" description="C2H2-type 2" evidence="1">
    <location>
        <begin position="249"/>
        <end position="273"/>
    </location>
</feature>
<feature type="zinc finger region" description="C2H2-type 3" evidence="1">
    <location>
        <begin position="279"/>
        <end position="303"/>
    </location>
</feature>
<feature type="zinc finger region" description="C2H2-type 4" evidence="1">
    <location>
        <begin position="309"/>
        <end position="333"/>
    </location>
</feature>
<feature type="zinc finger region" description="C2H2-type 5" evidence="1">
    <location>
        <begin position="339"/>
        <end position="362"/>
    </location>
</feature>
<feature type="region of interest" description="Disordered" evidence="2">
    <location>
        <begin position="187"/>
        <end position="213"/>
    </location>
</feature>
<feature type="binding site" evidence="5 15">
    <location>
        <position position="221"/>
    </location>
    <ligand>
        <name>Zn(2+)</name>
        <dbReference type="ChEBI" id="CHEBI:29105"/>
        <label>1</label>
        <note>structural</note>
    </ligand>
</feature>
<feature type="binding site" evidence="5 15">
    <location>
        <position position="226"/>
    </location>
    <ligand>
        <name>Zn(2+)</name>
        <dbReference type="ChEBI" id="CHEBI:29105"/>
        <label>1</label>
        <note>structural</note>
    </ligand>
</feature>
<feature type="binding site" evidence="5 15">
    <location>
        <position position="239"/>
    </location>
    <ligand>
        <name>Zn(2+)</name>
        <dbReference type="ChEBI" id="CHEBI:29105"/>
        <label>1</label>
        <note>structural</note>
    </ligand>
</feature>
<feature type="binding site" evidence="5 15">
    <location>
        <position position="243"/>
    </location>
    <ligand>
        <name>Zn(2+)</name>
        <dbReference type="ChEBI" id="CHEBI:29105"/>
        <label>1</label>
        <note>structural</note>
    </ligand>
</feature>
<feature type="binding site" evidence="5 15">
    <location>
        <position position="251"/>
    </location>
    <ligand>
        <name>Zn(2+)</name>
        <dbReference type="ChEBI" id="CHEBI:29105"/>
        <label>2</label>
        <note>structural</note>
    </ligand>
</feature>
<feature type="binding site" evidence="5 15">
    <location>
        <position position="256"/>
    </location>
    <ligand>
        <name>Zn(2+)</name>
        <dbReference type="ChEBI" id="CHEBI:29105"/>
        <label>2</label>
        <note>structural</note>
    </ligand>
</feature>
<feature type="binding site" evidence="5 15">
    <location>
        <position position="269"/>
    </location>
    <ligand>
        <name>Zn(2+)</name>
        <dbReference type="ChEBI" id="CHEBI:29105"/>
        <label>2</label>
        <note>structural</note>
    </ligand>
</feature>
<feature type="binding site" evidence="5 15">
    <location>
        <position position="273"/>
    </location>
    <ligand>
        <name>Zn(2+)</name>
        <dbReference type="ChEBI" id="CHEBI:29105"/>
        <label>2</label>
        <note>structural</note>
    </ligand>
</feature>
<feature type="binding site" evidence="5 15">
    <location>
        <position position="281"/>
    </location>
    <ligand>
        <name>Zn(2+)</name>
        <dbReference type="ChEBI" id="CHEBI:29105"/>
        <label>3</label>
        <note>structural</note>
    </ligand>
</feature>
<feature type="binding site" evidence="5 15">
    <location>
        <position position="286"/>
    </location>
    <ligand>
        <name>Zn(2+)</name>
        <dbReference type="ChEBI" id="CHEBI:29105"/>
        <label>3</label>
        <note>structural</note>
    </ligand>
</feature>
<feature type="binding site" evidence="5 15">
    <location>
        <position position="299"/>
    </location>
    <ligand>
        <name>Zn(2+)</name>
        <dbReference type="ChEBI" id="CHEBI:29105"/>
        <label>3</label>
        <note>structural</note>
    </ligand>
</feature>
<feature type="binding site" evidence="5 15">
    <location>
        <position position="303"/>
    </location>
    <ligand>
        <name>Zn(2+)</name>
        <dbReference type="ChEBI" id="CHEBI:29105"/>
        <label>3</label>
        <note>structural</note>
    </ligand>
</feature>
<feature type="binding site" evidence="5 15">
    <location>
        <position position="311"/>
    </location>
    <ligand>
        <name>Zn(2+)</name>
        <dbReference type="ChEBI" id="CHEBI:29105"/>
        <label>4</label>
        <note>structural</note>
    </ligand>
</feature>
<feature type="binding site" evidence="5 15">
    <location>
        <position position="316"/>
    </location>
    <ligand>
        <name>Zn(2+)</name>
        <dbReference type="ChEBI" id="CHEBI:29105"/>
        <label>4</label>
        <note>structural</note>
    </ligand>
</feature>
<feature type="binding site" evidence="5 15">
    <location>
        <position position="329"/>
    </location>
    <ligand>
        <name>Zn(2+)</name>
        <dbReference type="ChEBI" id="CHEBI:29105"/>
        <label>4</label>
        <note>structural</note>
    </ligand>
</feature>
<feature type="binding site" evidence="5 15">
    <location>
        <position position="333"/>
    </location>
    <ligand>
        <name>Zn(2+)</name>
        <dbReference type="ChEBI" id="CHEBI:29105"/>
        <label>4</label>
        <note>structural</note>
    </ligand>
</feature>
<feature type="binding site" evidence="5 15">
    <location>
        <position position="341"/>
    </location>
    <ligand>
        <name>Zn(2+)</name>
        <dbReference type="ChEBI" id="CHEBI:29105"/>
        <label>5</label>
        <note>structural</note>
    </ligand>
</feature>
<feature type="binding site" evidence="5 15">
    <location>
        <position position="344"/>
    </location>
    <ligand>
        <name>Zn(2+)</name>
        <dbReference type="ChEBI" id="CHEBI:29105"/>
        <label>5</label>
        <note>structural</note>
    </ligand>
</feature>
<feature type="binding site" evidence="5 15">
    <location>
        <position position="357"/>
    </location>
    <ligand>
        <name>Zn(2+)</name>
        <dbReference type="ChEBI" id="CHEBI:29105"/>
        <label>5</label>
        <note>structural</note>
    </ligand>
</feature>
<feature type="binding site" evidence="5 15">
    <location>
        <position position="361"/>
    </location>
    <ligand>
        <name>Zn(2+)</name>
        <dbReference type="ChEBI" id="CHEBI:29105"/>
        <label>5</label>
        <note>structural</note>
    </ligand>
</feature>
<feature type="splice variant" id="VSP_042424" description="In isoform 4." evidence="8">
    <location>
        <begin position="57"/>
        <end position="129"/>
    </location>
</feature>
<feature type="splice variant" id="VSP_043417" description="In isoform 5." evidence="8">
    <original>D</original>
    <variation>EPVPWREEDGKSGCSDLN</variation>
    <location>
        <position position="57"/>
    </location>
</feature>
<feature type="splice variant" id="VSP_008485" description="In isoform 2." evidence="9">
    <original>NDRSFICPAEGCGKSFYVLQRLKVHMRT</original>
    <variation>RLWEKLLCAAEAEGAHEDPQWREALYVP</variation>
    <location>
        <begin position="245"/>
        <end position="272"/>
    </location>
</feature>
<feature type="splice variant" id="VSP_008486" description="In isoform 2." evidence="9">
    <location>
        <begin position="273"/>
        <end position="478"/>
    </location>
</feature>
<feature type="splice variant" id="VSP_008487" description="In isoform 3." evidence="9">
    <location>
        <begin position="377"/>
        <end position="423"/>
    </location>
</feature>
<feature type="splice variant" id="VSP_043418" description="In isoform 5." evidence="8">
    <original>LLNQGDLTERRT</original>
    <variation>SLAPLPRLECSGAFSAHCNLCLPGSSDSPASAS</variation>
    <location>
        <begin position="467"/>
        <end position="478"/>
    </location>
</feature>
<feature type="turn" evidence="16">
    <location>
        <begin position="224"/>
        <end position="226"/>
    </location>
</feature>
<feature type="helix" evidence="16">
    <location>
        <begin position="233"/>
        <end position="244"/>
    </location>
</feature>
<feature type="turn" evidence="16">
    <location>
        <begin position="254"/>
        <end position="256"/>
    </location>
</feature>
<feature type="strand" evidence="16">
    <location>
        <begin position="259"/>
        <end position="262"/>
    </location>
</feature>
<feature type="helix" evidence="16">
    <location>
        <begin position="263"/>
        <end position="274"/>
    </location>
</feature>
<feature type="turn" evidence="16">
    <location>
        <begin position="284"/>
        <end position="286"/>
    </location>
</feature>
<feature type="strand" evidence="16">
    <location>
        <begin position="289"/>
        <end position="292"/>
    </location>
</feature>
<feature type="helix" evidence="16">
    <location>
        <begin position="293"/>
        <end position="299"/>
    </location>
</feature>
<feature type="helix" evidence="16">
    <location>
        <begin position="301"/>
        <end position="304"/>
    </location>
</feature>
<feature type="strand" evidence="16">
    <location>
        <begin position="313"/>
        <end position="315"/>
    </location>
</feature>
<feature type="strand" evidence="16">
    <location>
        <begin position="319"/>
        <end position="322"/>
    </location>
</feature>
<feature type="helix" evidence="16">
    <location>
        <begin position="323"/>
        <end position="334"/>
    </location>
</feature>
<feature type="turn" evidence="16">
    <location>
        <begin position="342"/>
        <end position="344"/>
    </location>
</feature>
<feature type="strand" evidence="16">
    <location>
        <begin position="347"/>
        <end position="350"/>
    </location>
</feature>
<feature type="helix" evidence="16">
    <location>
        <begin position="351"/>
        <end position="361"/>
    </location>
</feature>
<gene>
    <name evidence="10 14" type="primary">ZNF410</name>
    <name evidence="7" type="synonym">APA1</name>
</gene>
<organism>
    <name type="scientific">Homo sapiens</name>
    <name type="common">Human</name>
    <dbReference type="NCBI Taxonomy" id="9606"/>
    <lineage>
        <taxon>Eukaryota</taxon>
        <taxon>Metazoa</taxon>
        <taxon>Chordata</taxon>
        <taxon>Craniata</taxon>
        <taxon>Vertebrata</taxon>
        <taxon>Euteleostomi</taxon>
        <taxon>Mammalia</taxon>
        <taxon>Eutheria</taxon>
        <taxon>Euarchontoglires</taxon>
        <taxon>Primates</taxon>
        <taxon>Haplorrhini</taxon>
        <taxon>Catarrhini</taxon>
        <taxon>Hominidae</taxon>
        <taxon>Homo</taxon>
    </lineage>
</organism>